<comment type="catalytic activity">
    <reaction evidence="1">
        <text>CMP + ATP = CDP + ADP</text>
        <dbReference type="Rhea" id="RHEA:11600"/>
        <dbReference type="ChEBI" id="CHEBI:30616"/>
        <dbReference type="ChEBI" id="CHEBI:58069"/>
        <dbReference type="ChEBI" id="CHEBI:60377"/>
        <dbReference type="ChEBI" id="CHEBI:456216"/>
        <dbReference type="EC" id="2.7.4.25"/>
    </reaction>
</comment>
<comment type="catalytic activity">
    <reaction evidence="1">
        <text>dCMP + ATP = dCDP + ADP</text>
        <dbReference type="Rhea" id="RHEA:25094"/>
        <dbReference type="ChEBI" id="CHEBI:30616"/>
        <dbReference type="ChEBI" id="CHEBI:57566"/>
        <dbReference type="ChEBI" id="CHEBI:58593"/>
        <dbReference type="ChEBI" id="CHEBI:456216"/>
        <dbReference type="EC" id="2.7.4.25"/>
    </reaction>
</comment>
<comment type="subcellular location">
    <subcellularLocation>
        <location evidence="1">Cytoplasm</location>
    </subcellularLocation>
</comment>
<comment type="similarity">
    <text evidence="1">Belongs to the cytidylate kinase family. Type 1 subfamily.</text>
</comment>
<keyword id="KW-0067">ATP-binding</keyword>
<keyword id="KW-0963">Cytoplasm</keyword>
<keyword id="KW-0418">Kinase</keyword>
<keyword id="KW-0547">Nucleotide-binding</keyword>
<keyword id="KW-1185">Reference proteome</keyword>
<keyword id="KW-0808">Transferase</keyword>
<evidence type="ECO:0000255" key="1">
    <source>
        <dbReference type="HAMAP-Rule" id="MF_00238"/>
    </source>
</evidence>
<accession>P47572</accession>
<feature type="chain" id="PRO_0000131936" description="Cytidylate kinase">
    <location>
        <begin position="1"/>
        <end position="217"/>
    </location>
</feature>
<feature type="binding site" evidence="1">
    <location>
        <begin position="9"/>
        <end position="17"/>
    </location>
    <ligand>
        <name>ATP</name>
        <dbReference type="ChEBI" id="CHEBI:30616"/>
    </ligand>
</feature>
<organism>
    <name type="scientific">Mycoplasma genitalium (strain ATCC 33530 / DSM 19775 / NCTC 10195 / G37)</name>
    <name type="common">Mycoplasmoides genitalium</name>
    <dbReference type="NCBI Taxonomy" id="243273"/>
    <lineage>
        <taxon>Bacteria</taxon>
        <taxon>Bacillati</taxon>
        <taxon>Mycoplasmatota</taxon>
        <taxon>Mycoplasmoidales</taxon>
        <taxon>Mycoplasmoidaceae</taxon>
        <taxon>Mycoplasmoides</taxon>
    </lineage>
</organism>
<gene>
    <name evidence="1" type="primary">cmk</name>
    <name type="ordered locus">MG330</name>
</gene>
<sequence>MNWQIAIDGPSSSGKSSVAKKIAEELDFFYFSSGKMYRAFAYVMQVNRLNIDLFLKIINQINWRFEKDAVYYNNADITTVITTQSVANIASKIAVDPNIRKIAVIKQQKLAENKNIVMDGRDIGTVVLKNAQLKFFLDAKVEIRAQRRLQDMGISLSNEKKLKELIQELKQRDQIDSSRTADPLKKAQDAIYLDTSELSFDAVVKQTLKEAKKVFKL</sequence>
<protein>
    <recommendedName>
        <fullName evidence="1">Cytidylate kinase</fullName>
        <shortName evidence="1">CK</shortName>
        <ecNumber evidence="1">2.7.4.25</ecNumber>
    </recommendedName>
    <alternativeName>
        <fullName evidence="1">Cytidine monophosphate kinase</fullName>
        <shortName evidence="1">CMP kinase</shortName>
    </alternativeName>
</protein>
<proteinExistence type="inferred from homology"/>
<dbReference type="EC" id="2.7.4.25" evidence="1"/>
<dbReference type="EMBL" id="L43967">
    <property type="protein sequence ID" value="AAC71554.1"/>
    <property type="molecule type" value="Genomic_DNA"/>
</dbReference>
<dbReference type="EMBL" id="U02241">
    <property type="protein sequence ID" value="AAA03397.1"/>
    <property type="molecule type" value="Genomic_DNA"/>
</dbReference>
<dbReference type="PIR" id="E64236">
    <property type="entry name" value="E64236"/>
</dbReference>
<dbReference type="RefSeq" id="WP_010869435.1">
    <property type="nucleotide sequence ID" value="NC_000908.2"/>
</dbReference>
<dbReference type="SMR" id="P47572"/>
<dbReference type="FunCoup" id="P47572">
    <property type="interactions" value="98"/>
</dbReference>
<dbReference type="STRING" id="243273.MG_330"/>
<dbReference type="GeneID" id="88282503"/>
<dbReference type="KEGG" id="mge:MG_330"/>
<dbReference type="eggNOG" id="COG0283">
    <property type="taxonomic scope" value="Bacteria"/>
</dbReference>
<dbReference type="HOGENOM" id="CLU_079959_0_2_14"/>
<dbReference type="InParanoid" id="P47572"/>
<dbReference type="OrthoDB" id="9807434at2"/>
<dbReference type="BioCyc" id="MGEN243273:G1GJ2-412-MONOMER"/>
<dbReference type="Proteomes" id="UP000000807">
    <property type="component" value="Chromosome"/>
</dbReference>
<dbReference type="GO" id="GO:0005829">
    <property type="term" value="C:cytosol"/>
    <property type="evidence" value="ECO:0000318"/>
    <property type="project" value="GO_Central"/>
</dbReference>
<dbReference type="GO" id="GO:0004127">
    <property type="term" value="F:(d)CMP kinase activity"/>
    <property type="evidence" value="ECO:0000318"/>
    <property type="project" value="GO_Central"/>
</dbReference>
<dbReference type="GO" id="GO:0005524">
    <property type="term" value="F:ATP binding"/>
    <property type="evidence" value="ECO:0007669"/>
    <property type="project" value="UniProtKB-UniRule"/>
</dbReference>
<dbReference type="GO" id="GO:0036430">
    <property type="term" value="F:CMP kinase activity"/>
    <property type="evidence" value="ECO:0007669"/>
    <property type="project" value="RHEA"/>
</dbReference>
<dbReference type="GO" id="GO:0036431">
    <property type="term" value="F:dCMP kinase activity"/>
    <property type="evidence" value="ECO:0007669"/>
    <property type="project" value="RHEA"/>
</dbReference>
<dbReference type="GO" id="GO:0015949">
    <property type="term" value="P:nucleobase-containing small molecule interconversion"/>
    <property type="evidence" value="ECO:0000318"/>
    <property type="project" value="GO_Central"/>
</dbReference>
<dbReference type="GO" id="GO:0006220">
    <property type="term" value="P:pyrimidine nucleotide metabolic process"/>
    <property type="evidence" value="ECO:0007669"/>
    <property type="project" value="UniProtKB-UniRule"/>
</dbReference>
<dbReference type="CDD" id="cd02020">
    <property type="entry name" value="CMPK"/>
    <property type="match status" value="1"/>
</dbReference>
<dbReference type="FunFam" id="3.40.50.300:FF:003002">
    <property type="entry name" value="Cytidylate kinase"/>
    <property type="match status" value="1"/>
</dbReference>
<dbReference type="Gene3D" id="3.40.50.300">
    <property type="entry name" value="P-loop containing nucleotide triphosphate hydrolases"/>
    <property type="match status" value="1"/>
</dbReference>
<dbReference type="HAMAP" id="MF_00238">
    <property type="entry name" value="Cytidyl_kinase_type1"/>
    <property type="match status" value="1"/>
</dbReference>
<dbReference type="InterPro" id="IPR003136">
    <property type="entry name" value="Cytidylate_kin"/>
</dbReference>
<dbReference type="InterPro" id="IPR011994">
    <property type="entry name" value="Cytidylate_kinase_dom"/>
</dbReference>
<dbReference type="InterPro" id="IPR027417">
    <property type="entry name" value="P-loop_NTPase"/>
</dbReference>
<dbReference type="NCBIfam" id="TIGR00017">
    <property type="entry name" value="cmk"/>
    <property type="match status" value="1"/>
</dbReference>
<dbReference type="PANTHER" id="PTHR21299:SF2">
    <property type="entry name" value="CYTIDYLATE KINASE"/>
    <property type="match status" value="1"/>
</dbReference>
<dbReference type="PANTHER" id="PTHR21299">
    <property type="entry name" value="CYTIDYLATE KINASE/PANTOATE-BETA-ALANINE LIGASE"/>
    <property type="match status" value="1"/>
</dbReference>
<dbReference type="Pfam" id="PF02224">
    <property type="entry name" value="Cytidylate_kin"/>
    <property type="match status" value="1"/>
</dbReference>
<dbReference type="SUPFAM" id="SSF52540">
    <property type="entry name" value="P-loop containing nucleoside triphosphate hydrolases"/>
    <property type="match status" value="1"/>
</dbReference>
<reference key="1">
    <citation type="journal article" date="1995" name="Science">
        <title>The minimal gene complement of Mycoplasma genitalium.</title>
        <authorList>
            <person name="Fraser C.M."/>
            <person name="Gocayne J.D."/>
            <person name="White O."/>
            <person name="Adams M.D."/>
            <person name="Clayton R.A."/>
            <person name="Fleischmann R.D."/>
            <person name="Bult C.J."/>
            <person name="Kerlavage A.R."/>
            <person name="Sutton G.G."/>
            <person name="Kelley J.M."/>
            <person name="Fritchman J.L."/>
            <person name="Weidman J.F."/>
            <person name="Small K.V."/>
            <person name="Sandusky M."/>
            <person name="Fuhrmann J.L."/>
            <person name="Nguyen D.T."/>
            <person name="Utterback T.R."/>
            <person name="Saudek D.M."/>
            <person name="Phillips C.A."/>
            <person name="Merrick J.M."/>
            <person name="Tomb J.-F."/>
            <person name="Dougherty B.A."/>
            <person name="Bott K.F."/>
            <person name="Hu P.-C."/>
            <person name="Lucier T.S."/>
            <person name="Peterson S.N."/>
            <person name="Smith H.O."/>
            <person name="Hutchison C.A. III"/>
            <person name="Venter J.C."/>
        </authorList>
    </citation>
    <scope>NUCLEOTIDE SEQUENCE [LARGE SCALE GENOMIC DNA]</scope>
    <source>
        <strain>ATCC 33530 / DSM 19775 / NCTC 10195 / G37</strain>
    </source>
</reference>
<reference key="2">
    <citation type="journal article" date="1993" name="J. Bacteriol.">
        <title>A survey of the Mycoplasma genitalium genome by using random sequencing.</title>
        <authorList>
            <person name="Peterson S.N."/>
            <person name="Hu P.-C."/>
            <person name="Bott K.F."/>
            <person name="Hutchison C.A. III"/>
        </authorList>
    </citation>
    <scope>NUCLEOTIDE SEQUENCE [GENOMIC DNA] OF 76-179</scope>
    <source>
        <strain>ATCC 33530 / DSM 19775 / NCTC 10195 / G37</strain>
    </source>
</reference>
<name>KCY_MYCGE</name>